<protein>
    <recommendedName>
        <fullName evidence="2">Translation initiation factor IF-2</fullName>
    </recommendedName>
</protein>
<proteinExistence type="inferred from homology"/>
<feature type="chain" id="PRO_1000075601" description="Translation initiation factor IF-2">
    <location>
        <begin position="1"/>
        <end position="803"/>
    </location>
</feature>
<feature type="domain" description="tr-type G">
    <location>
        <begin position="302"/>
        <end position="471"/>
    </location>
</feature>
<feature type="region of interest" description="Disordered" evidence="3">
    <location>
        <begin position="95"/>
        <end position="125"/>
    </location>
</feature>
<feature type="region of interest" description="Disordered" evidence="3">
    <location>
        <begin position="138"/>
        <end position="178"/>
    </location>
</feature>
<feature type="region of interest" description="G1" evidence="1">
    <location>
        <begin position="311"/>
        <end position="318"/>
    </location>
</feature>
<feature type="region of interest" description="G2" evidence="1">
    <location>
        <begin position="336"/>
        <end position="340"/>
    </location>
</feature>
<feature type="region of interest" description="G3" evidence="1">
    <location>
        <begin position="357"/>
        <end position="360"/>
    </location>
</feature>
<feature type="region of interest" description="G4" evidence="1">
    <location>
        <begin position="411"/>
        <end position="414"/>
    </location>
</feature>
<feature type="region of interest" description="G5" evidence="1">
    <location>
        <begin position="447"/>
        <end position="449"/>
    </location>
</feature>
<feature type="compositionally biased region" description="Polar residues" evidence="3">
    <location>
        <begin position="111"/>
        <end position="121"/>
    </location>
</feature>
<feature type="compositionally biased region" description="Basic and acidic residues" evidence="3">
    <location>
        <begin position="138"/>
        <end position="155"/>
    </location>
</feature>
<feature type="compositionally biased region" description="Basic residues" evidence="3">
    <location>
        <begin position="156"/>
        <end position="167"/>
    </location>
</feature>
<feature type="compositionally biased region" description="Basic and acidic residues" evidence="3">
    <location>
        <begin position="168"/>
        <end position="178"/>
    </location>
</feature>
<feature type="binding site" evidence="2">
    <location>
        <begin position="311"/>
        <end position="318"/>
    </location>
    <ligand>
        <name>GTP</name>
        <dbReference type="ChEBI" id="CHEBI:37565"/>
    </ligand>
</feature>
<feature type="binding site" evidence="2">
    <location>
        <begin position="357"/>
        <end position="361"/>
    </location>
    <ligand>
        <name>GTP</name>
        <dbReference type="ChEBI" id="CHEBI:37565"/>
    </ligand>
</feature>
<feature type="binding site" evidence="2">
    <location>
        <begin position="411"/>
        <end position="414"/>
    </location>
    <ligand>
        <name>GTP</name>
        <dbReference type="ChEBI" id="CHEBI:37565"/>
    </ligand>
</feature>
<evidence type="ECO:0000250" key="1"/>
<evidence type="ECO:0000255" key="2">
    <source>
        <dbReference type="HAMAP-Rule" id="MF_00100"/>
    </source>
</evidence>
<evidence type="ECO:0000256" key="3">
    <source>
        <dbReference type="SAM" id="MobiDB-lite"/>
    </source>
</evidence>
<evidence type="ECO:0000305" key="4"/>
<accession>A9KBM1</accession>
<comment type="function">
    <text evidence="2">One of the essential components for the initiation of protein synthesis. Protects formylmethionyl-tRNA from spontaneous hydrolysis and promotes its binding to the 30S ribosomal subunits. Also involved in the hydrolysis of GTP during the formation of the 70S ribosomal complex.</text>
</comment>
<comment type="subcellular location">
    <subcellularLocation>
        <location evidence="2">Cytoplasm</location>
    </subcellularLocation>
</comment>
<comment type="similarity">
    <text evidence="2">Belongs to the TRAFAC class translation factor GTPase superfamily. Classic translation factor GTPase family. IF-2 subfamily.</text>
</comment>
<comment type="sequence caution" evidence="4">
    <conflict type="erroneous initiation">
        <sequence resource="EMBL-CDS" id="ABS76663"/>
    </conflict>
</comment>
<name>IF2_COXBN</name>
<reference key="1">
    <citation type="journal article" date="2009" name="Infect. Immun.">
        <title>Comparative genomics reveal extensive transposon-mediated genomic plasticity and diversity among potential effector proteins within the genus Coxiella.</title>
        <authorList>
            <person name="Beare P.A."/>
            <person name="Unsworth N."/>
            <person name="Andoh M."/>
            <person name="Voth D.E."/>
            <person name="Omsland A."/>
            <person name="Gilk S.D."/>
            <person name="Williams K.P."/>
            <person name="Sobral B.W."/>
            <person name="Kupko J.J. III"/>
            <person name="Porcella S.F."/>
            <person name="Samuel J.E."/>
            <person name="Heinzen R.A."/>
        </authorList>
    </citation>
    <scope>NUCLEOTIDE SEQUENCE [LARGE SCALE GENOMIC DNA]</scope>
    <source>
        <strain>Dugway 5J108-111</strain>
    </source>
</reference>
<gene>
    <name evidence="2" type="primary">infB</name>
    <name type="ordered locus">CBUD_0563</name>
</gene>
<sequence>MADMSVKQLADLVRTTPERLLEQLKEAGVAITHVDQTISDEEKRKLLLHLKTSHSTETDKKRSKIVLKRKKLSVVKSGKKSVNVEIRSKRTYTKPVVEQKRETEPAPTQEVPLTSDTTNLNEKAEVNVATLEKAVEAEVKEEAKKTPSEKKETPKKGPRKETRRSRKPDKEDKWEREELHMTKLVEERRRRHKPAHMPDSDNASAKLEQGFARPTAPVVREVALPESITVADLAQKMSVKAAEVIKAMMKLGAMVTINQRIDQETAAIVVEEMGHKPKLIKEDVLEENLVATLGEQTGEAVPRAPVVTIMGHVDHGKTSLLDYIRRTKVTSTEAGGITQHIGAYHVETELGMITFLDTPGHEAFTAMRARGAKCTDIVVLVVAADDGIMPQTVEAIQHARAAKVPVVVAVNKIDKPEADPERIKTELSTHDVLPEEWGGDTMFQPISAKTGEGIDALLERILLQAEVLELKAVDNGPARGMVVESRLDRGRGPVATVLVTSGELHLGDILLVGREYGRVRAMIGDDGRPCESAGPSMPVEVLGLSGTPVAGEEAIVVPDERKAREIARFRQGKYREVRLAKKQTAHLERIFDRMGEGKQNTLNIVLKADVQGSLEALTEALNKLSTDEVKVNIIASGVGGITESDVNLAIASDAVVIGFNVRADAPTRVLVEREGVDLRYYSIIYDLIDEVKKALSGLLAPEFEEKIVGLAEVRDVFRSSKIGAIAGCMVVEGVVRRHLPIRVLRDNVVIYEGLLESLRRYKEDVAEVRQGTECGIGVKNYNDVKVGDQIEVYEKTQVHRTIA</sequence>
<dbReference type="EMBL" id="CP000733">
    <property type="protein sequence ID" value="ABS76663.2"/>
    <property type="status" value="ALT_INIT"/>
    <property type="molecule type" value="Genomic_DNA"/>
</dbReference>
<dbReference type="RefSeq" id="WP_043880842.1">
    <property type="nucleotide sequence ID" value="NC_009727.1"/>
</dbReference>
<dbReference type="SMR" id="A9KBM1"/>
<dbReference type="KEGG" id="cbd:CBUD_0563"/>
<dbReference type="HOGENOM" id="CLU_006301_6_1_6"/>
<dbReference type="Proteomes" id="UP000008555">
    <property type="component" value="Chromosome"/>
</dbReference>
<dbReference type="GO" id="GO:0005829">
    <property type="term" value="C:cytosol"/>
    <property type="evidence" value="ECO:0007669"/>
    <property type="project" value="TreeGrafter"/>
</dbReference>
<dbReference type="GO" id="GO:0005525">
    <property type="term" value="F:GTP binding"/>
    <property type="evidence" value="ECO:0007669"/>
    <property type="project" value="UniProtKB-KW"/>
</dbReference>
<dbReference type="GO" id="GO:0003924">
    <property type="term" value="F:GTPase activity"/>
    <property type="evidence" value="ECO:0007669"/>
    <property type="project" value="UniProtKB-UniRule"/>
</dbReference>
<dbReference type="GO" id="GO:0003743">
    <property type="term" value="F:translation initiation factor activity"/>
    <property type="evidence" value="ECO:0007669"/>
    <property type="project" value="UniProtKB-UniRule"/>
</dbReference>
<dbReference type="CDD" id="cd01887">
    <property type="entry name" value="IF2_eIF5B"/>
    <property type="match status" value="1"/>
</dbReference>
<dbReference type="CDD" id="cd03702">
    <property type="entry name" value="IF2_mtIF2_II"/>
    <property type="match status" value="1"/>
</dbReference>
<dbReference type="CDD" id="cd03692">
    <property type="entry name" value="mtIF2_IVc"/>
    <property type="match status" value="1"/>
</dbReference>
<dbReference type="FunFam" id="2.40.30.10:FF:000007">
    <property type="entry name" value="Translation initiation factor IF-2"/>
    <property type="match status" value="1"/>
</dbReference>
<dbReference type="FunFam" id="2.40.30.10:FF:000008">
    <property type="entry name" value="Translation initiation factor IF-2"/>
    <property type="match status" value="1"/>
</dbReference>
<dbReference type="FunFam" id="3.40.50.10050:FF:000001">
    <property type="entry name" value="Translation initiation factor IF-2"/>
    <property type="match status" value="1"/>
</dbReference>
<dbReference type="FunFam" id="3.40.50.300:FF:000019">
    <property type="entry name" value="Translation initiation factor IF-2"/>
    <property type="match status" value="1"/>
</dbReference>
<dbReference type="Gene3D" id="3.40.50.300">
    <property type="entry name" value="P-loop containing nucleotide triphosphate hydrolases"/>
    <property type="match status" value="1"/>
</dbReference>
<dbReference type="Gene3D" id="3.30.56.50">
    <property type="entry name" value="Putative DNA-binding domain, N-terminal subdomain of bacterial translation initiation factor IF2"/>
    <property type="match status" value="1"/>
</dbReference>
<dbReference type="Gene3D" id="2.40.30.10">
    <property type="entry name" value="Translation factors"/>
    <property type="match status" value="2"/>
</dbReference>
<dbReference type="Gene3D" id="3.40.50.10050">
    <property type="entry name" value="Translation initiation factor IF- 2, domain 3"/>
    <property type="match status" value="1"/>
</dbReference>
<dbReference type="HAMAP" id="MF_00100_B">
    <property type="entry name" value="IF_2_B"/>
    <property type="match status" value="1"/>
</dbReference>
<dbReference type="InterPro" id="IPR009061">
    <property type="entry name" value="DNA-bd_dom_put_sf"/>
</dbReference>
<dbReference type="InterPro" id="IPR053905">
    <property type="entry name" value="EF-G-like_DII"/>
</dbReference>
<dbReference type="InterPro" id="IPR044145">
    <property type="entry name" value="IF2_II"/>
</dbReference>
<dbReference type="InterPro" id="IPR006847">
    <property type="entry name" value="IF2_N"/>
</dbReference>
<dbReference type="InterPro" id="IPR027417">
    <property type="entry name" value="P-loop_NTPase"/>
</dbReference>
<dbReference type="InterPro" id="IPR005225">
    <property type="entry name" value="Small_GTP-bd"/>
</dbReference>
<dbReference type="InterPro" id="IPR000795">
    <property type="entry name" value="T_Tr_GTP-bd_dom"/>
</dbReference>
<dbReference type="InterPro" id="IPR000178">
    <property type="entry name" value="TF_IF2_bacterial-like"/>
</dbReference>
<dbReference type="InterPro" id="IPR015760">
    <property type="entry name" value="TIF_IF2"/>
</dbReference>
<dbReference type="InterPro" id="IPR023115">
    <property type="entry name" value="TIF_IF2_dom3"/>
</dbReference>
<dbReference type="InterPro" id="IPR036925">
    <property type="entry name" value="TIF_IF2_dom3_sf"/>
</dbReference>
<dbReference type="InterPro" id="IPR009000">
    <property type="entry name" value="Transl_B-barrel_sf"/>
</dbReference>
<dbReference type="NCBIfam" id="TIGR00487">
    <property type="entry name" value="IF-2"/>
    <property type="match status" value="1"/>
</dbReference>
<dbReference type="NCBIfam" id="TIGR00231">
    <property type="entry name" value="small_GTP"/>
    <property type="match status" value="1"/>
</dbReference>
<dbReference type="PANTHER" id="PTHR43381:SF5">
    <property type="entry name" value="TR-TYPE G DOMAIN-CONTAINING PROTEIN"/>
    <property type="match status" value="1"/>
</dbReference>
<dbReference type="PANTHER" id="PTHR43381">
    <property type="entry name" value="TRANSLATION INITIATION FACTOR IF-2-RELATED"/>
    <property type="match status" value="1"/>
</dbReference>
<dbReference type="Pfam" id="PF22042">
    <property type="entry name" value="EF-G_D2"/>
    <property type="match status" value="1"/>
</dbReference>
<dbReference type="Pfam" id="PF00009">
    <property type="entry name" value="GTP_EFTU"/>
    <property type="match status" value="1"/>
</dbReference>
<dbReference type="Pfam" id="PF11987">
    <property type="entry name" value="IF-2"/>
    <property type="match status" value="1"/>
</dbReference>
<dbReference type="Pfam" id="PF04760">
    <property type="entry name" value="IF2_N"/>
    <property type="match status" value="2"/>
</dbReference>
<dbReference type="SUPFAM" id="SSF52156">
    <property type="entry name" value="Initiation factor IF2/eIF5b, domain 3"/>
    <property type="match status" value="1"/>
</dbReference>
<dbReference type="SUPFAM" id="SSF52540">
    <property type="entry name" value="P-loop containing nucleoside triphosphate hydrolases"/>
    <property type="match status" value="1"/>
</dbReference>
<dbReference type="SUPFAM" id="SSF46955">
    <property type="entry name" value="Putative DNA-binding domain"/>
    <property type="match status" value="1"/>
</dbReference>
<dbReference type="SUPFAM" id="SSF50447">
    <property type="entry name" value="Translation proteins"/>
    <property type="match status" value="2"/>
</dbReference>
<dbReference type="PROSITE" id="PS51722">
    <property type="entry name" value="G_TR_2"/>
    <property type="match status" value="1"/>
</dbReference>
<dbReference type="PROSITE" id="PS01176">
    <property type="entry name" value="IF2"/>
    <property type="match status" value="1"/>
</dbReference>
<organism>
    <name type="scientific">Coxiella burnetii (strain Dugway 5J108-111)</name>
    <dbReference type="NCBI Taxonomy" id="434922"/>
    <lineage>
        <taxon>Bacteria</taxon>
        <taxon>Pseudomonadati</taxon>
        <taxon>Pseudomonadota</taxon>
        <taxon>Gammaproteobacteria</taxon>
        <taxon>Legionellales</taxon>
        <taxon>Coxiellaceae</taxon>
        <taxon>Coxiella</taxon>
    </lineage>
</organism>
<keyword id="KW-0963">Cytoplasm</keyword>
<keyword id="KW-0342">GTP-binding</keyword>
<keyword id="KW-0396">Initiation factor</keyword>
<keyword id="KW-0547">Nucleotide-binding</keyword>
<keyword id="KW-0648">Protein biosynthesis</keyword>